<organism>
    <name type="scientific">Candida glabrata (strain ATCC 2001 / BCRC 20586 / JCM 3761 / NBRC 0622 / NRRL Y-65 / CBS 138)</name>
    <name type="common">Yeast</name>
    <name type="synonym">Nakaseomyces glabratus</name>
    <dbReference type="NCBI Taxonomy" id="284593"/>
    <lineage>
        <taxon>Eukaryota</taxon>
        <taxon>Fungi</taxon>
        <taxon>Dikarya</taxon>
        <taxon>Ascomycota</taxon>
        <taxon>Saccharomycotina</taxon>
        <taxon>Saccharomycetes</taxon>
        <taxon>Saccharomycetales</taxon>
        <taxon>Saccharomycetaceae</taxon>
        <taxon>Nakaseomyces</taxon>
    </lineage>
</organism>
<proteinExistence type="inferred from homology"/>
<gene>
    <name type="primary">HEM1</name>
    <name type="ordered locus">CAGL0B02607g</name>
</gene>
<feature type="transit peptide" description="Mitochondrion" evidence="3">
    <location>
        <begin position="1"/>
        <end position="26"/>
    </location>
</feature>
<feature type="chain" id="PRO_0000001238" description="5-aminolevulinate synthase, mitochondrial">
    <location>
        <begin position="27"/>
        <end position="530"/>
    </location>
</feature>
<feature type="active site" evidence="2">
    <location>
        <position position="319"/>
    </location>
</feature>
<feature type="binding site" evidence="2">
    <location>
        <position position="73"/>
    </location>
    <ligand>
        <name>substrate</name>
    </ligand>
</feature>
<feature type="binding site" evidence="2">
    <location>
        <position position="186"/>
    </location>
    <ligand>
        <name>substrate</name>
    </ligand>
</feature>
<feature type="binding site" evidence="2">
    <location>
        <position position="205"/>
    </location>
    <ligand>
        <name>substrate</name>
    </ligand>
</feature>
<feature type="binding site" description="in other chain" evidence="2">
    <location>
        <position position="238"/>
    </location>
    <ligand>
        <name>pyridoxal 5'-phosphate</name>
        <dbReference type="ChEBI" id="CHEBI:597326"/>
        <note>ligand shared between dimeric partners</note>
    </ligand>
</feature>
<feature type="binding site" description="in other chain" evidence="2">
    <location>
        <position position="266"/>
    </location>
    <ligand>
        <name>pyridoxal 5'-phosphate</name>
        <dbReference type="ChEBI" id="CHEBI:597326"/>
        <note>ligand shared between dimeric partners</note>
    </ligand>
</feature>
<feature type="binding site" description="in other chain" evidence="2">
    <location>
        <position position="316"/>
    </location>
    <ligand>
        <name>pyridoxal 5'-phosphate</name>
        <dbReference type="ChEBI" id="CHEBI:597326"/>
        <note>ligand shared between dimeric partners</note>
    </ligand>
</feature>
<feature type="binding site" evidence="2">
    <location>
        <position position="348"/>
    </location>
    <ligand>
        <name>pyridoxal 5'-phosphate</name>
        <dbReference type="ChEBI" id="CHEBI:597326"/>
        <note>ligand shared between dimeric partners</note>
    </ligand>
</feature>
<feature type="binding site" evidence="2">
    <location>
        <position position="349"/>
    </location>
    <ligand>
        <name>pyridoxal 5'-phosphate</name>
        <dbReference type="ChEBI" id="CHEBI:597326"/>
        <note>ligand shared between dimeric partners</note>
    </ligand>
</feature>
<feature type="binding site" evidence="2">
    <location>
        <position position="434"/>
    </location>
    <ligand>
        <name>substrate</name>
    </ligand>
</feature>
<feature type="modified residue" description="N6-(pyridoxal phosphate)lysine" evidence="2">
    <location>
        <position position="319"/>
    </location>
</feature>
<keyword id="KW-0012">Acyltransferase</keyword>
<keyword id="KW-0350">Heme biosynthesis</keyword>
<keyword id="KW-0496">Mitochondrion</keyword>
<keyword id="KW-0663">Pyridoxal phosphate</keyword>
<keyword id="KW-1185">Reference proteome</keyword>
<keyword id="KW-0808">Transferase</keyword>
<keyword id="KW-0809">Transit peptide</keyword>
<protein>
    <recommendedName>
        <fullName>5-aminolevulinate synthase, mitochondrial</fullName>
        <ecNumber>2.3.1.37</ecNumber>
    </recommendedName>
    <alternativeName>
        <fullName>5-aminolevulinic acid synthase</fullName>
    </alternativeName>
    <alternativeName>
        <fullName>Delta-ALA synthase</fullName>
    </alternativeName>
    <alternativeName>
        <fullName>Delta-aminolevulinate synthase</fullName>
    </alternativeName>
</protein>
<name>HEM1_CANGA</name>
<accession>Q6FXE3</accession>
<dbReference type="EC" id="2.3.1.37"/>
<dbReference type="EMBL" id="CR380948">
    <property type="protein sequence ID" value="CAG57984.1"/>
    <property type="molecule type" value="Genomic_DNA"/>
</dbReference>
<dbReference type="RefSeq" id="XP_445084.1">
    <property type="nucleotide sequence ID" value="XM_445084.1"/>
</dbReference>
<dbReference type="SMR" id="Q6FXE3"/>
<dbReference type="FunCoup" id="Q6FXE3">
    <property type="interactions" value="498"/>
</dbReference>
<dbReference type="STRING" id="284593.Q6FXE3"/>
<dbReference type="EnsemblFungi" id="CAGL0B02607g-T">
    <property type="protein sequence ID" value="CAGL0B02607g-T-p1"/>
    <property type="gene ID" value="CAGL0B02607g"/>
</dbReference>
<dbReference type="GeneID" id="2886690"/>
<dbReference type="KEGG" id="cgr:2886690"/>
<dbReference type="CGD" id="CAL0127812">
    <property type="gene designation" value="HEM1"/>
</dbReference>
<dbReference type="VEuPathDB" id="FungiDB:B1J91_B02607g"/>
<dbReference type="VEuPathDB" id="FungiDB:CAGL0B02607g"/>
<dbReference type="eggNOG" id="KOG1360">
    <property type="taxonomic scope" value="Eukaryota"/>
</dbReference>
<dbReference type="HOGENOM" id="CLU_015846_6_0_1"/>
<dbReference type="InParanoid" id="Q6FXE3"/>
<dbReference type="OMA" id="ARRCPIM"/>
<dbReference type="UniPathway" id="UPA00251">
    <property type="reaction ID" value="UER00375"/>
</dbReference>
<dbReference type="Proteomes" id="UP000002428">
    <property type="component" value="Chromosome B"/>
</dbReference>
<dbReference type="GO" id="GO:0005759">
    <property type="term" value="C:mitochondrial matrix"/>
    <property type="evidence" value="ECO:0007669"/>
    <property type="project" value="UniProtKB-SubCell"/>
</dbReference>
<dbReference type="GO" id="GO:0003870">
    <property type="term" value="F:5-aminolevulinate synthase activity"/>
    <property type="evidence" value="ECO:0007669"/>
    <property type="project" value="UniProtKB-EC"/>
</dbReference>
<dbReference type="GO" id="GO:0030170">
    <property type="term" value="F:pyridoxal phosphate binding"/>
    <property type="evidence" value="ECO:0007669"/>
    <property type="project" value="InterPro"/>
</dbReference>
<dbReference type="GO" id="GO:1902117">
    <property type="term" value="P:positive regulation of organelle assembly"/>
    <property type="evidence" value="ECO:0007669"/>
    <property type="project" value="EnsemblFungi"/>
</dbReference>
<dbReference type="GO" id="GO:0006782">
    <property type="term" value="P:protoporphyrinogen IX biosynthetic process"/>
    <property type="evidence" value="ECO:0007669"/>
    <property type="project" value="UniProtKB-UniPathway"/>
</dbReference>
<dbReference type="CDD" id="cd06454">
    <property type="entry name" value="KBL_like"/>
    <property type="match status" value="1"/>
</dbReference>
<dbReference type="FunFam" id="3.40.640.10:FF:000006">
    <property type="entry name" value="5-aminolevulinate synthase, mitochondrial"/>
    <property type="match status" value="1"/>
</dbReference>
<dbReference type="Gene3D" id="3.90.1150.10">
    <property type="entry name" value="Aspartate Aminotransferase, domain 1"/>
    <property type="match status" value="1"/>
</dbReference>
<dbReference type="Gene3D" id="3.40.640.10">
    <property type="entry name" value="Type I PLP-dependent aspartate aminotransferase-like (Major domain)"/>
    <property type="match status" value="1"/>
</dbReference>
<dbReference type="InterPro" id="IPR010961">
    <property type="entry name" value="4pyrrol_synth_NH2levulA_synth"/>
</dbReference>
<dbReference type="InterPro" id="IPR001917">
    <property type="entry name" value="Aminotrans_II_pyridoxalP_BS"/>
</dbReference>
<dbReference type="InterPro" id="IPR004839">
    <property type="entry name" value="Aminotransferase_I/II_large"/>
</dbReference>
<dbReference type="InterPro" id="IPR050087">
    <property type="entry name" value="AON_synthase_class-II"/>
</dbReference>
<dbReference type="InterPro" id="IPR015424">
    <property type="entry name" value="PyrdxlP-dep_Trfase"/>
</dbReference>
<dbReference type="InterPro" id="IPR015421">
    <property type="entry name" value="PyrdxlP-dep_Trfase_major"/>
</dbReference>
<dbReference type="InterPro" id="IPR015422">
    <property type="entry name" value="PyrdxlP-dep_Trfase_small"/>
</dbReference>
<dbReference type="NCBIfam" id="TIGR01821">
    <property type="entry name" value="5aminolev_synth"/>
    <property type="match status" value="1"/>
</dbReference>
<dbReference type="PANTHER" id="PTHR13693:SF102">
    <property type="entry name" value="2-AMINO-3-KETOBUTYRATE COENZYME A LIGASE, MITOCHONDRIAL"/>
    <property type="match status" value="1"/>
</dbReference>
<dbReference type="PANTHER" id="PTHR13693">
    <property type="entry name" value="CLASS II AMINOTRANSFERASE/8-AMINO-7-OXONONANOATE SYNTHASE"/>
    <property type="match status" value="1"/>
</dbReference>
<dbReference type="Pfam" id="PF00155">
    <property type="entry name" value="Aminotran_1_2"/>
    <property type="match status" value="1"/>
</dbReference>
<dbReference type="SUPFAM" id="SSF53383">
    <property type="entry name" value="PLP-dependent transferases"/>
    <property type="match status" value="1"/>
</dbReference>
<dbReference type="PROSITE" id="PS00599">
    <property type="entry name" value="AA_TRANSFER_CLASS_2"/>
    <property type="match status" value="1"/>
</dbReference>
<comment type="function">
    <text evidence="1">Catalyzes the synthesis of 5-aminolevulinate (ALA) from succinyl-CoA and glycine, the first and rate-limiting step in heme biosynthesis.</text>
</comment>
<comment type="catalytic activity">
    <reaction evidence="1">
        <text>succinyl-CoA + glycine + H(+) = 5-aminolevulinate + CO2 + CoA</text>
        <dbReference type="Rhea" id="RHEA:12921"/>
        <dbReference type="ChEBI" id="CHEBI:15378"/>
        <dbReference type="ChEBI" id="CHEBI:16526"/>
        <dbReference type="ChEBI" id="CHEBI:57287"/>
        <dbReference type="ChEBI" id="CHEBI:57292"/>
        <dbReference type="ChEBI" id="CHEBI:57305"/>
        <dbReference type="ChEBI" id="CHEBI:356416"/>
        <dbReference type="EC" id="2.3.1.37"/>
    </reaction>
</comment>
<comment type="cofactor">
    <cofactor evidence="1">
        <name>pyridoxal 5'-phosphate</name>
        <dbReference type="ChEBI" id="CHEBI:597326"/>
    </cofactor>
</comment>
<comment type="pathway">
    <text evidence="1">Porphyrin-containing compound metabolism; protoporphyrin-IX biosynthesis; 5-aminolevulinate from glycine: step 1/1.</text>
</comment>
<comment type="subunit">
    <text evidence="1">Homodimer.</text>
</comment>
<comment type="subcellular location">
    <subcellularLocation>
        <location evidence="1">Mitochondrion matrix</location>
    </subcellularLocation>
</comment>
<comment type="similarity">
    <text evidence="4">Belongs to the class-II pyridoxal-phosphate-dependent aminotransferase family.</text>
</comment>
<evidence type="ECO:0000250" key="1">
    <source>
        <dbReference type="UniProtKB" id="P09950"/>
    </source>
</evidence>
<evidence type="ECO:0000250" key="2">
    <source>
        <dbReference type="UniProtKB" id="P18079"/>
    </source>
</evidence>
<evidence type="ECO:0000255" key="3"/>
<evidence type="ECO:0000305" key="4"/>
<reference key="1">
    <citation type="journal article" date="2004" name="Nature">
        <title>Genome evolution in yeasts.</title>
        <authorList>
            <person name="Dujon B."/>
            <person name="Sherman D."/>
            <person name="Fischer G."/>
            <person name="Durrens P."/>
            <person name="Casaregola S."/>
            <person name="Lafontaine I."/>
            <person name="de Montigny J."/>
            <person name="Marck C."/>
            <person name="Neuveglise C."/>
            <person name="Talla E."/>
            <person name="Goffard N."/>
            <person name="Frangeul L."/>
            <person name="Aigle M."/>
            <person name="Anthouard V."/>
            <person name="Babour A."/>
            <person name="Barbe V."/>
            <person name="Barnay S."/>
            <person name="Blanchin S."/>
            <person name="Beckerich J.-M."/>
            <person name="Beyne E."/>
            <person name="Bleykasten C."/>
            <person name="Boisrame A."/>
            <person name="Boyer J."/>
            <person name="Cattolico L."/>
            <person name="Confanioleri F."/>
            <person name="de Daruvar A."/>
            <person name="Despons L."/>
            <person name="Fabre E."/>
            <person name="Fairhead C."/>
            <person name="Ferry-Dumazet H."/>
            <person name="Groppi A."/>
            <person name="Hantraye F."/>
            <person name="Hennequin C."/>
            <person name="Jauniaux N."/>
            <person name="Joyet P."/>
            <person name="Kachouri R."/>
            <person name="Kerrest A."/>
            <person name="Koszul R."/>
            <person name="Lemaire M."/>
            <person name="Lesur I."/>
            <person name="Ma L."/>
            <person name="Muller H."/>
            <person name="Nicaud J.-M."/>
            <person name="Nikolski M."/>
            <person name="Oztas S."/>
            <person name="Ozier-Kalogeropoulos O."/>
            <person name="Pellenz S."/>
            <person name="Potier S."/>
            <person name="Richard G.-F."/>
            <person name="Straub M.-L."/>
            <person name="Suleau A."/>
            <person name="Swennen D."/>
            <person name="Tekaia F."/>
            <person name="Wesolowski-Louvel M."/>
            <person name="Westhof E."/>
            <person name="Wirth B."/>
            <person name="Zeniou-Meyer M."/>
            <person name="Zivanovic Y."/>
            <person name="Bolotin-Fukuhara M."/>
            <person name="Thierry A."/>
            <person name="Bouchier C."/>
            <person name="Caudron B."/>
            <person name="Scarpelli C."/>
            <person name="Gaillardin C."/>
            <person name="Weissenbach J."/>
            <person name="Wincker P."/>
            <person name="Souciet J.-L."/>
        </authorList>
    </citation>
    <scope>NUCLEOTIDE SEQUENCE [LARGE SCALE GENOMIC DNA]</scope>
    <source>
        <strain>ATCC 2001 / BCRC 20586 / JCM 3761 / NBRC 0622 / NRRL Y-65 / CBS 138</strain>
    </source>
</reference>
<sequence>MFRPVLKVRPSFSYPYSIVSSRSVRLASTATANANTAAATSTVAAHGTQETPFDFEGHFESELAKKRLDKSYRYFNNINRLAKEFPLAHRQLEDDKVTVWCSNDYLALSKNPQVLDAMRKTIDKYGAGAGGTRNIAGHNIPTMRLEAELAALHKKEGALVFSSCYVANDAVISLLGQKVKDLVIFSDELNHASMIVGIKHANRPKHIFRHNDLAQLEEMLQMYPKSTPKLIAFESVYSMAGSVADINKICDLAEKYGALTFLDEVHAVGLYGPHGAGVAEHCDFEAHRVAGIATPPQGDNGRLRTVMDRVDMITGTLGKSFGTVGGYVAASSKLIDWVRSYAPGFIFTTTLPPAVMAGAAEAIRFQRSHLNLRQDQQRHTAYVKKGLHDLGIPVIPNPSHIVPVLIGNPDLAKQASDILMEKHRIYVQAINFPTVSRGTERLRITPTPGHTNDLSDILIAAVDDVFNELQLPRIRDWEMQGGLLGVGDKNFVPEPNLWTEEQLSFSNEDLNSNVFEPVIDQLEVSSGVKL</sequence>